<keyword id="KW-0665">Pyrimidine biosynthesis</keyword>
<keyword id="KW-0808">Transferase</keyword>
<reference key="1">
    <citation type="submission" date="2008-01" db="EMBL/GenBank/DDBJ databases">
        <title>Complete sequence of chromosome of Caulobacter sp. K31.</title>
        <authorList>
            <consortium name="US DOE Joint Genome Institute"/>
            <person name="Copeland A."/>
            <person name="Lucas S."/>
            <person name="Lapidus A."/>
            <person name="Barry K."/>
            <person name="Glavina del Rio T."/>
            <person name="Dalin E."/>
            <person name="Tice H."/>
            <person name="Pitluck S."/>
            <person name="Bruce D."/>
            <person name="Goodwin L."/>
            <person name="Thompson L.S."/>
            <person name="Brettin T."/>
            <person name="Detter J.C."/>
            <person name="Han C."/>
            <person name="Schmutz J."/>
            <person name="Larimer F."/>
            <person name="Land M."/>
            <person name="Hauser L."/>
            <person name="Kyrpides N."/>
            <person name="Kim E."/>
            <person name="Stephens C."/>
            <person name="Richardson P."/>
        </authorList>
    </citation>
    <scope>NUCLEOTIDE SEQUENCE [LARGE SCALE GENOMIC DNA]</scope>
    <source>
        <strain>K31</strain>
    </source>
</reference>
<organism>
    <name type="scientific">Caulobacter sp. (strain K31)</name>
    <dbReference type="NCBI Taxonomy" id="366602"/>
    <lineage>
        <taxon>Bacteria</taxon>
        <taxon>Pseudomonadati</taxon>
        <taxon>Pseudomonadota</taxon>
        <taxon>Alphaproteobacteria</taxon>
        <taxon>Caulobacterales</taxon>
        <taxon>Caulobacteraceae</taxon>
        <taxon>Caulobacter</taxon>
    </lineage>
</organism>
<dbReference type="EC" id="2.1.3.2" evidence="1"/>
<dbReference type="EMBL" id="CP000927">
    <property type="protein sequence ID" value="ABZ70647.1"/>
    <property type="molecule type" value="Genomic_DNA"/>
</dbReference>
<dbReference type="SMR" id="B0T190"/>
<dbReference type="STRING" id="366602.Caul_1517"/>
<dbReference type="KEGG" id="cak:Caul_1517"/>
<dbReference type="eggNOG" id="COG0540">
    <property type="taxonomic scope" value="Bacteria"/>
</dbReference>
<dbReference type="HOGENOM" id="CLU_043846_2_0_5"/>
<dbReference type="OrthoDB" id="9774690at2"/>
<dbReference type="UniPathway" id="UPA00070">
    <property type="reaction ID" value="UER00116"/>
</dbReference>
<dbReference type="GO" id="GO:0005829">
    <property type="term" value="C:cytosol"/>
    <property type="evidence" value="ECO:0007669"/>
    <property type="project" value="TreeGrafter"/>
</dbReference>
<dbReference type="GO" id="GO:0016597">
    <property type="term" value="F:amino acid binding"/>
    <property type="evidence" value="ECO:0007669"/>
    <property type="project" value="InterPro"/>
</dbReference>
<dbReference type="GO" id="GO:0004070">
    <property type="term" value="F:aspartate carbamoyltransferase activity"/>
    <property type="evidence" value="ECO:0007669"/>
    <property type="project" value="UniProtKB-UniRule"/>
</dbReference>
<dbReference type="GO" id="GO:0006207">
    <property type="term" value="P:'de novo' pyrimidine nucleobase biosynthetic process"/>
    <property type="evidence" value="ECO:0007669"/>
    <property type="project" value="InterPro"/>
</dbReference>
<dbReference type="GO" id="GO:0044205">
    <property type="term" value="P:'de novo' UMP biosynthetic process"/>
    <property type="evidence" value="ECO:0007669"/>
    <property type="project" value="UniProtKB-UniRule"/>
</dbReference>
<dbReference type="GO" id="GO:0006520">
    <property type="term" value="P:amino acid metabolic process"/>
    <property type="evidence" value="ECO:0007669"/>
    <property type="project" value="InterPro"/>
</dbReference>
<dbReference type="FunFam" id="3.40.50.1370:FF:000007">
    <property type="entry name" value="Aspartate carbamoyltransferase"/>
    <property type="match status" value="1"/>
</dbReference>
<dbReference type="Gene3D" id="3.40.50.1370">
    <property type="entry name" value="Aspartate/ornithine carbamoyltransferase"/>
    <property type="match status" value="2"/>
</dbReference>
<dbReference type="HAMAP" id="MF_00001">
    <property type="entry name" value="Asp_carb_tr"/>
    <property type="match status" value="1"/>
</dbReference>
<dbReference type="InterPro" id="IPR006132">
    <property type="entry name" value="Asp/Orn_carbamoyltranf_P-bd"/>
</dbReference>
<dbReference type="InterPro" id="IPR006130">
    <property type="entry name" value="Asp/Orn_carbamoylTrfase"/>
</dbReference>
<dbReference type="InterPro" id="IPR036901">
    <property type="entry name" value="Asp/Orn_carbamoylTrfase_sf"/>
</dbReference>
<dbReference type="InterPro" id="IPR002082">
    <property type="entry name" value="Asp_carbamoyltransf"/>
</dbReference>
<dbReference type="InterPro" id="IPR006131">
    <property type="entry name" value="Asp_carbamoyltransf_Asp/Orn-bd"/>
</dbReference>
<dbReference type="NCBIfam" id="TIGR00670">
    <property type="entry name" value="asp_carb_tr"/>
    <property type="match status" value="1"/>
</dbReference>
<dbReference type="NCBIfam" id="NF002032">
    <property type="entry name" value="PRK00856.1"/>
    <property type="match status" value="1"/>
</dbReference>
<dbReference type="PANTHER" id="PTHR45753:SF6">
    <property type="entry name" value="ASPARTATE CARBAMOYLTRANSFERASE"/>
    <property type="match status" value="1"/>
</dbReference>
<dbReference type="PANTHER" id="PTHR45753">
    <property type="entry name" value="ORNITHINE CARBAMOYLTRANSFERASE, MITOCHONDRIAL"/>
    <property type="match status" value="1"/>
</dbReference>
<dbReference type="Pfam" id="PF00185">
    <property type="entry name" value="OTCace"/>
    <property type="match status" value="1"/>
</dbReference>
<dbReference type="Pfam" id="PF02729">
    <property type="entry name" value="OTCace_N"/>
    <property type="match status" value="1"/>
</dbReference>
<dbReference type="PRINTS" id="PR00100">
    <property type="entry name" value="AOTCASE"/>
</dbReference>
<dbReference type="PRINTS" id="PR00101">
    <property type="entry name" value="ATCASE"/>
</dbReference>
<dbReference type="SUPFAM" id="SSF53671">
    <property type="entry name" value="Aspartate/ornithine carbamoyltransferase"/>
    <property type="match status" value="1"/>
</dbReference>
<dbReference type="PROSITE" id="PS00097">
    <property type="entry name" value="CARBAMOYLTRANSFERASE"/>
    <property type="match status" value="1"/>
</dbReference>
<accession>B0T190</accession>
<evidence type="ECO:0000255" key="1">
    <source>
        <dbReference type="HAMAP-Rule" id="MF_00001"/>
    </source>
</evidence>
<gene>
    <name evidence="1" type="primary">pyrB</name>
    <name type="ordered locus">Caul_1517</name>
</gene>
<sequence length="335" mass="36202">MTAKAPPAPHDPARAIDPILERIFSFPRRHFLSAGDLNAPQATDLLDLADAFVAFNRQTSKSLDILKGRTLMNLFFENSTRTQSSFEIAGKRLGADVVNMSPRTSSITKGETLIDTAVTLNAMRPDLLVVRHASSGAASLLSQKVSGSVINAGDGQHEHPTQAVLDALSIRRAFGRVSGLTVAICGDVLHSRVARSNVALLHTLGASVRLVGPPTLMPAQAERWGVTVHHDMKAGIAGADVVMMLRLQLERMQGAFVPSTREYFRFYGLDREKLARAAPKAKVMHPGPMNRGVEIDSDVADDPEISLIQDQVEMGVAARMAVLASLAHRLEEHGQ</sequence>
<name>PYRB_CAUSK</name>
<feature type="chain" id="PRO_0000334587" description="Aspartate carbamoyltransferase catalytic subunit">
    <location>
        <begin position="1"/>
        <end position="335"/>
    </location>
</feature>
<feature type="binding site" evidence="1">
    <location>
        <position position="81"/>
    </location>
    <ligand>
        <name>carbamoyl phosphate</name>
        <dbReference type="ChEBI" id="CHEBI:58228"/>
    </ligand>
</feature>
<feature type="binding site" evidence="1">
    <location>
        <position position="82"/>
    </location>
    <ligand>
        <name>carbamoyl phosphate</name>
        <dbReference type="ChEBI" id="CHEBI:58228"/>
    </ligand>
</feature>
<feature type="binding site" evidence="1">
    <location>
        <position position="109"/>
    </location>
    <ligand>
        <name>L-aspartate</name>
        <dbReference type="ChEBI" id="CHEBI:29991"/>
    </ligand>
</feature>
<feature type="binding site" evidence="1">
    <location>
        <position position="131"/>
    </location>
    <ligand>
        <name>carbamoyl phosphate</name>
        <dbReference type="ChEBI" id="CHEBI:58228"/>
    </ligand>
</feature>
<feature type="binding site" evidence="1">
    <location>
        <position position="159"/>
    </location>
    <ligand>
        <name>carbamoyl phosphate</name>
        <dbReference type="ChEBI" id="CHEBI:58228"/>
    </ligand>
</feature>
<feature type="binding site" evidence="1">
    <location>
        <position position="162"/>
    </location>
    <ligand>
        <name>carbamoyl phosphate</name>
        <dbReference type="ChEBI" id="CHEBI:58228"/>
    </ligand>
</feature>
<feature type="binding site" evidence="1">
    <location>
        <position position="192"/>
    </location>
    <ligand>
        <name>L-aspartate</name>
        <dbReference type="ChEBI" id="CHEBI:29991"/>
    </ligand>
</feature>
<feature type="binding site" evidence="1">
    <location>
        <position position="246"/>
    </location>
    <ligand>
        <name>L-aspartate</name>
        <dbReference type="ChEBI" id="CHEBI:29991"/>
    </ligand>
</feature>
<feature type="binding site" evidence="1">
    <location>
        <position position="287"/>
    </location>
    <ligand>
        <name>carbamoyl phosphate</name>
        <dbReference type="ChEBI" id="CHEBI:58228"/>
    </ligand>
</feature>
<feature type="binding site" evidence="1">
    <location>
        <position position="288"/>
    </location>
    <ligand>
        <name>carbamoyl phosphate</name>
        <dbReference type="ChEBI" id="CHEBI:58228"/>
    </ligand>
</feature>
<protein>
    <recommendedName>
        <fullName evidence="1">Aspartate carbamoyltransferase catalytic subunit</fullName>
        <ecNumber evidence="1">2.1.3.2</ecNumber>
    </recommendedName>
    <alternativeName>
        <fullName evidence="1">Aspartate transcarbamylase</fullName>
        <shortName evidence="1">ATCase</shortName>
    </alternativeName>
</protein>
<proteinExistence type="inferred from homology"/>
<comment type="function">
    <text evidence="1">Catalyzes the condensation of carbamoyl phosphate and aspartate to form carbamoyl aspartate and inorganic phosphate, the committed step in the de novo pyrimidine nucleotide biosynthesis pathway.</text>
</comment>
<comment type="catalytic activity">
    <reaction evidence="1">
        <text>carbamoyl phosphate + L-aspartate = N-carbamoyl-L-aspartate + phosphate + H(+)</text>
        <dbReference type="Rhea" id="RHEA:20013"/>
        <dbReference type="ChEBI" id="CHEBI:15378"/>
        <dbReference type="ChEBI" id="CHEBI:29991"/>
        <dbReference type="ChEBI" id="CHEBI:32814"/>
        <dbReference type="ChEBI" id="CHEBI:43474"/>
        <dbReference type="ChEBI" id="CHEBI:58228"/>
        <dbReference type="EC" id="2.1.3.2"/>
    </reaction>
</comment>
<comment type="pathway">
    <text evidence="1">Pyrimidine metabolism; UMP biosynthesis via de novo pathway; (S)-dihydroorotate from bicarbonate: step 2/3.</text>
</comment>
<comment type="subunit">
    <text evidence="1">Heterododecamer (2C3:3R2) of six catalytic PyrB chains organized as two trimers (C3), and six regulatory PyrI chains organized as three dimers (R2).</text>
</comment>
<comment type="similarity">
    <text evidence="1">Belongs to the aspartate/ornithine carbamoyltransferase superfamily. ATCase family.</text>
</comment>